<evidence type="ECO:0000255" key="1">
    <source>
        <dbReference type="HAMAP-Rule" id="MF_01356"/>
    </source>
</evidence>
<comment type="function">
    <text evidence="1">NDH-1 shuttles electrons from NADH, via FMN and iron-sulfur (Fe-S) centers, to quinones in the respiratory chain. The immediate electron acceptor for the enzyme in this species is believed to be ubiquinone. Couples the redox reaction to proton translocation (for every two electrons transferred, four hydrogen ions are translocated across the cytoplasmic membrane), and thus conserves the redox energy in a proton gradient.</text>
</comment>
<comment type="catalytic activity">
    <reaction evidence="1">
        <text>a quinone + NADH + 5 H(+)(in) = a quinol + NAD(+) + 4 H(+)(out)</text>
        <dbReference type="Rhea" id="RHEA:57888"/>
        <dbReference type="ChEBI" id="CHEBI:15378"/>
        <dbReference type="ChEBI" id="CHEBI:24646"/>
        <dbReference type="ChEBI" id="CHEBI:57540"/>
        <dbReference type="ChEBI" id="CHEBI:57945"/>
        <dbReference type="ChEBI" id="CHEBI:132124"/>
    </reaction>
</comment>
<comment type="cofactor">
    <cofactor evidence="1">
        <name>[4Fe-4S] cluster</name>
        <dbReference type="ChEBI" id="CHEBI:49883"/>
    </cofactor>
    <text evidence="1">Binds 1 [4Fe-4S] cluster.</text>
</comment>
<comment type="subunit">
    <text evidence="1">NDH-1 is composed of 14 different subunits. Subunits NuoB, C, D, E, F, and G constitute the peripheral sector of the complex.</text>
</comment>
<comment type="subcellular location">
    <subcellularLocation>
        <location evidence="1">Cell inner membrane</location>
        <topology evidence="1">Peripheral membrane protein</topology>
        <orientation evidence="1">Cytoplasmic side</orientation>
    </subcellularLocation>
</comment>
<comment type="similarity">
    <text evidence="1">Belongs to the complex I 20 kDa subunit family.</text>
</comment>
<organism>
    <name type="scientific">Desulfovibrio desulfuricans (strain ATCC 27774 / DSM 6949 / MB)</name>
    <dbReference type="NCBI Taxonomy" id="525146"/>
    <lineage>
        <taxon>Bacteria</taxon>
        <taxon>Pseudomonadati</taxon>
        <taxon>Thermodesulfobacteriota</taxon>
        <taxon>Desulfovibrionia</taxon>
        <taxon>Desulfovibrionales</taxon>
        <taxon>Desulfovibrionaceae</taxon>
        <taxon>Desulfovibrio</taxon>
    </lineage>
</organism>
<dbReference type="EC" id="7.1.1.-" evidence="1"/>
<dbReference type="EMBL" id="CP001358">
    <property type="protein sequence ID" value="ACL49563.1"/>
    <property type="molecule type" value="Genomic_DNA"/>
</dbReference>
<dbReference type="SMR" id="B8J1D6"/>
<dbReference type="STRING" id="525146.Ddes_1664"/>
<dbReference type="KEGG" id="dds:Ddes_1664"/>
<dbReference type="eggNOG" id="COG0377">
    <property type="taxonomic scope" value="Bacteria"/>
</dbReference>
<dbReference type="HOGENOM" id="CLU_055737_7_3_7"/>
<dbReference type="GO" id="GO:0005886">
    <property type="term" value="C:plasma membrane"/>
    <property type="evidence" value="ECO:0007669"/>
    <property type="project" value="UniProtKB-SubCell"/>
</dbReference>
<dbReference type="GO" id="GO:0045271">
    <property type="term" value="C:respiratory chain complex I"/>
    <property type="evidence" value="ECO:0007669"/>
    <property type="project" value="TreeGrafter"/>
</dbReference>
<dbReference type="GO" id="GO:0051539">
    <property type="term" value="F:4 iron, 4 sulfur cluster binding"/>
    <property type="evidence" value="ECO:0007669"/>
    <property type="project" value="UniProtKB-KW"/>
</dbReference>
<dbReference type="GO" id="GO:0005506">
    <property type="term" value="F:iron ion binding"/>
    <property type="evidence" value="ECO:0007669"/>
    <property type="project" value="UniProtKB-UniRule"/>
</dbReference>
<dbReference type="GO" id="GO:0008137">
    <property type="term" value="F:NADH dehydrogenase (ubiquinone) activity"/>
    <property type="evidence" value="ECO:0007669"/>
    <property type="project" value="InterPro"/>
</dbReference>
<dbReference type="GO" id="GO:0050136">
    <property type="term" value="F:NADH:ubiquinone reductase (non-electrogenic) activity"/>
    <property type="evidence" value="ECO:0007669"/>
    <property type="project" value="UniProtKB-UniRule"/>
</dbReference>
<dbReference type="GO" id="GO:0048038">
    <property type="term" value="F:quinone binding"/>
    <property type="evidence" value="ECO:0007669"/>
    <property type="project" value="UniProtKB-KW"/>
</dbReference>
<dbReference type="GO" id="GO:0009060">
    <property type="term" value="P:aerobic respiration"/>
    <property type="evidence" value="ECO:0007669"/>
    <property type="project" value="TreeGrafter"/>
</dbReference>
<dbReference type="GO" id="GO:0015990">
    <property type="term" value="P:electron transport coupled proton transport"/>
    <property type="evidence" value="ECO:0007669"/>
    <property type="project" value="TreeGrafter"/>
</dbReference>
<dbReference type="FunFam" id="3.40.50.12280:FF:000002">
    <property type="entry name" value="NADH-quinone oxidoreductase subunit B"/>
    <property type="match status" value="1"/>
</dbReference>
<dbReference type="Gene3D" id="3.40.50.12280">
    <property type="match status" value="1"/>
</dbReference>
<dbReference type="HAMAP" id="MF_01356">
    <property type="entry name" value="NDH1_NuoB"/>
    <property type="match status" value="1"/>
</dbReference>
<dbReference type="InterPro" id="IPR006137">
    <property type="entry name" value="NADH_UbQ_OxRdtase-like_20kDa"/>
</dbReference>
<dbReference type="InterPro" id="IPR006138">
    <property type="entry name" value="NADH_UQ_OxRdtase_20Kd_su"/>
</dbReference>
<dbReference type="NCBIfam" id="TIGR01957">
    <property type="entry name" value="nuoB_fam"/>
    <property type="match status" value="1"/>
</dbReference>
<dbReference type="NCBIfam" id="NF005012">
    <property type="entry name" value="PRK06411.1"/>
    <property type="match status" value="1"/>
</dbReference>
<dbReference type="PANTHER" id="PTHR11995">
    <property type="entry name" value="NADH DEHYDROGENASE"/>
    <property type="match status" value="1"/>
</dbReference>
<dbReference type="PANTHER" id="PTHR11995:SF14">
    <property type="entry name" value="NADH DEHYDROGENASE [UBIQUINONE] IRON-SULFUR PROTEIN 7, MITOCHONDRIAL"/>
    <property type="match status" value="1"/>
</dbReference>
<dbReference type="Pfam" id="PF01058">
    <property type="entry name" value="Oxidored_q6"/>
    <property type="match status" value="1"/>
</dbReference>
<dbReference type="SUPFAM" id="SSF56770">
    <property type="entry name" value="HydA/Nqo6-like"/>
    <property type="match status" value="1"/>
</dbReference>
<proteinExistence type="inferred from homology"/>
<keyword id="KW-0004">4Fe-4S</keyword>
<keyword id="KW-0997">Cell inner membrane</keyword>
<keyword id="KW-1003">Cell membrane</keyword>
<keyword id="KW-0408">Iron</keyword>
<keyword id="KW-0411">Iron-sulfur</keyword>
<keyword id="KW-0472">Membrane</keyword>
<keyword id="KW-0479">Metal-binding</keyword>
<keyword id="KW-0520">NAD</keyword>
<keyword id="KW-0874">Quinone</keyword>
<keyword id="KW-1278">Translocase</keyword>
<keyword id="KW-0813">Transport</keyword>
<keyword id="KW-0830">Ubiquinone</keyword>
<name>NUOB_DESDA</name>
<reference key="1">
    <citation type="submission" date="2009-01" db="EMBL/GenBank/DDBJ databases">
        <title>Complete sequence of Desulfovibrio desulfuricans subsp. desulfuricans str. ATCC 27774.</title>
        <authorList>
            <consortium name="US DOE Joint Genome Institute"/>
            <person name="Lucas S."/>
            <person name="Copeland A."/>
            <person name="Lapidus A."/>
            <person name="Glavina del Rio T."/>
            <person name="Tice H."/>
            <person name="Bruce D."/>
            <person name="Goodwin L."/>
            <person name="Pitluck S."/>
            <person name="Sims D."/>
            <person name="Lu M."/>
            <person name="Kiss H."/>
            <person name="Meineke L."/>
            <person name="Brettin T."/>
            <person name="Detter J.C."/>
            <person name="Han C."/>
            <person name="Larimer F."/>
            <person name="Land M."/>
            <person name="Hauser L."/>
            <person name="Kyrpides N."/>
            <person name="Ovchinnikova G."/>
            <person name="Hazen T.C."/>
        </authorList>
    </citation>
    <scope>NUCLEOTIDE SEQUENCE [LARGE SCALE GENOMIC DNA]</scope>
    <source>
        <strain>ATCC 27774 / DSM 6949 / MB</strain>
    </source>
</reference>
<accession>B8J1D6</accession>
<sequence>MGEVVTKSGGAVHTGGQPLEVSKDGLRFFPGAGAVIGPLNALVNWGRAGSIWPVTFGLACCAIEMMATGAAHHDLDRFGIIFRASPRQADCMVVAGTLSKKMAPVLRRVYDQMPEPRYVLAMGSCACSGGLFQSYAVTQGVDQVVPVDVYVPGCPPRPEALFDGFIRLQEIINKEQMRWSPWR</sequence>
<protein>
    <recommendedName>
        <fullName evidence="1">NADH-quinone oxidoreductase subunit B</fullName>
        <ecNumber evidence="1">7.1.1.-</ecNumber>
    </recommendedName>
    <alternativeName>
        <fullName evidence="1">NADH dehydrogenase I subunit B</fullName>
    </alternativeName>
    <alternativeName>
        <fullName evidence="1">NDH-1 subunit B</fullName>
    </alternativeName>
</protein>
<feature type="chain" id="PRO_0000376198" description="NADH-quinone oxidoreductase subunit B">
    <location>
        <begin position="1"/>
        <end position="183"/>
    </location>
</feature>
<feature type="binding site" evidence="1">
    <location>
        <position position="60"/>
    </location>
    <ligand>
        <name>[4Fe-4S] cluster</name>
        <dbReference type="ChEBI" id="CHEBI:49883"/>
    </ligand>
</feature>
<feature type="binding site" evidence="1">
    <location>
        <position position="61"/>
    </location>
    <ligand>
        <name>[4Fe-4S] cluster</name>
        <dbReference type="ChEBI" id="CHEBI:49883"/>
    </ligand>
</feature>
<feature type="binding site" evidence="1">
    <location>
        <position position="125"/>
    </location>
    <ligand>
        <name>[4Fe-4S] cluster</name>
        <dbReference type="ChEBI" id="CHEBI:49883"/>
    </ligand>
</feature>
<feature type="binding site" evidence="1">
    <location>
        <position position="154"/>
    </location>
    <ligand>
        <name>[4Fe-4S] cluster</name>
        <dbReference type="ChEBI" id="CHEBI:49883"/>
    </ligand>
</feature>
<gene>
    <name evidence="1" type="primary">nuoB</name>
    <name type="ordered locus">Ddes_1664</name>
</gene>